<reference key="1">
    <citation type="journal article" date="1998" name="Mol. Cell. Biol.">
        <title>A novel functional human eukaryotic translation initiation factor 4G.</title>
        <authorList>
            <person name="Gradi A."/>
            <person name="Imataka H."/>
            <person name="Svitkin Y.V."/>
            <person name="Rom E."/>
            <person name="Raught B."/>
            <person name="Morino S."/>
            <person name="Sonenberg N."/>
        </authorList>
    </citation>
    <scope>NUCLEOTIDE SEQUENCE [MRNA] (ISOFORM 1)</scope>
    <scope>FUNCTION</scope>
    <scope>INTERACTION WITH EIF4A; EIF4E AND EIF3</scope>
</reference>
<reference key="2">
    <citation type="journal article" date="2006" name="Nature">
        <title>The DNA sequence and biological annotation of human chromosome 1.</title>
        <authorList>
            <person name="Gregory S.G."/>
            <person name="Barlow K.F."/>
            <person name="McLay K.E."/>
            <person name="Kaul R."/>
            <person name="Swarbreck D."/>
            <person name="Dunham A."/>
            <person name="Scott C.E."/>
            <person name="Howe K.L."/>
            <person name="Woodfine K."/>
            <person name="Spencer C.C.A."/>
            <person name="Jones M.C."/>
            <person name="Gillson C."/>
            <person name="Searle S."/>
            <person name="Zhou Y."/>
            <person name="Kokocinski F."/>
            <person name="McDonald L."/>
            <person name="Evans R."/>
            <person name="Phillips K."/>
            <person name="Atkinson A."/>
            <person name="Cooper R."/>
            <person name="Jones C."/>
            <person name="Hall R.E."/>
            <person name="Andrews T.D."/>
            <person name="Lloyd C."/>
            <person name="Ainscough R."/>
            <person name="Almeida J.P."/>
            <person name="Ambrose K.D."/>
            <person name="Anderson F."/>
            <person name="Andrew R.W."/>
            <person name="Ashwell R.I.S."/>
            <person name="Aubin K."/>
            <person name="Babbage A.K."/>
            <person name="Bagguley C.L."/>
            <person name="Bailey J."/>
            <person name="Beasley H."/>
            <person name="Bethel G."/>
            <person name="Bird C.P."/>
            <person name="Bray-Allen S."/>
            <person name="Brown J.Y."/>
            <person name="Brown A.J."/>
            <person name="Buckley D."/>
            <person name="Burton J."/>
            <person name="Bye J."/>
            <person name="Carder C."/>
            <person name="Chapman J.C."/>
            <person name="Clark S.Y."/>
            <person name="Clarke G."/>
            <person name="Clee C."/>
            <person name="Cobley V."/>
            <person name="Collier R.E."/>
            <person name="Corby N."/>
            <person name="Coville G.J."/>
            <person name="Davies J."/>
            <person name="Deadman R."/>
            <person name="Dunn M."/>
            <person name="Earthrowl M."/>
            <person name="Ellington A.G."/>
            <person name="Errington H."/>
            <person name="Frankish A."/>
            <person name="Frankland J."/>
            <person name="French L."/>
            <person name="Garner P."/>
            <person name="Garnett J."/>
            <person name="Gay L."/>
            <person name="Ghori M.R.J."/>
            <person name="Gibson R."/>
            <person name="Gilby L.M."/>
            <person name="Gillett W."/>
            <person name="Glithero R.J."/>
            <person name="Grafham D.V."/>
            <person name="Griffiths C."/>
            <person name="Griffiths-Jones S."/>
            <person name="Grocock R."/>
            <person name="Hammond S."/>
            <person name="Harrison E.S.I."/>
            <person name="Hart E."/>
            <person name="Haugen E."/>
            <person name="Heath P.D."/>
            <person name="Holmes S."/>
            <person name="Holt K."/>
            <person name="Howden P.J."/>
            <person name="Hunt A.R."/>
            <person name="Hunt S.E."/>
            <person name="Hunter G."/>
            <person name="Isherwood J."/>
            <person name="James R."/>
            <person name="Johnson C."/>
            <person name="Johnson D."/>
            <person name="Joy A."/>
            <person name="Kay M."/>
            <person name="Kershaw J.K."/>
            <person name="Kibukawa M."/>
            <person name="Kimberley A.M."/>
            <person name="King A."/>
            <person name="Knights A.J."/>
            <person name="Lad H."/>
            <person name="Laird G."/>
            <person name="Lawlor S."/>
            <person name="Leongamornlert D.A."/>
            <person name="Lloyd D.M."/>
            <person name="Loveland J."/>
            <person name="Lovell J."/>
            <person name="Lush M.J."/>
            <person name="Lyne R."/>
            <person name="Martin S."/>
            <person name="Mashreghi-Mohammadi M."/>
            <person name="Matthews L."/>
            <person name="Matthews N.S.W."/>
            <person name="McLaren S."/>
            <person name="Milne S."/>
            <person name="Mistry S."/>
            <person name="Moore M.J.F."/>
            <person name="Nickerson T."/>
            <person name="O'Dell C.N."/>
            <person name="Oliver K."/>
            <person name="Palmeiri A."/>
            <person name="Palmer S.A."/>
            <person name="Parker A."/>
            <person name="Patel D."/>
            <person name="Pearce A.V."/>
            <person name="Peck A.I."/>
            <person name="Pelan S."/>
            <person name="Phelps K."/>
            <person name="Phillimore B.J."/>
            <person name="Plumb R."/>
            <person name="Rajan J."/>
            <person name="Raymond C."/>
            <person name="Rouse G."/>
            <person name="Saenphimmachak C."/>
            <person name="Sehra H.K."/>
            <person name="Sheridan E."/>
            <person name="Shownkeen R."/>
            <person name="Sims S."/>
            <person name="Skuce C.D."/>
            <person name="Smith M."/>
            <person name="Steward C."/>
            <person name="Subramanian S."/>
            <person name="Sycamore N."/>
            <person name="Tracey A."/>
            <person name="Tromans A."/>
            <person name="Van Helmond Z."/>
            <person name="Wall M."/>
            <person name="Wallis J.M."/>
            <person name="White S."/>
            <person name="Whitehead S.L."/>
            <person name="Wilkinson J.E."/>
            <person name="Willey D.L."/>
            <person name="Williams H."/>
            <person name="Wilming L."/>
            <person name="Wray P.W."/>
            <person name="Wu Z."/>
            <person name="Coulson A."/>
            <person name="Vaudin M."/>
            <person name="Sulston J.E."/>
            <person name="Durbin R.M."/>
            <person name="Hubbard T."/>
            <person name="Wooster R."/>
            <person name="Dunham I."/>
            <person name="Carter N.P."/>
            <person name="McVean G."/>
            <person name="Ross M.T."/>
            <person name="Harrow J."/>
            <person name="Olson M.V."/>
            <person name="Beck S."/>
            <person name="Rogers J."/>
            <person name="Bentley D.R."/>
        </authorList>
    </citation>
    <scope>NUCLEOTIDE SEQUENCE [LARGE SCALE GENOMIC DNA]</scope>
</reference>
<reference key="3">
    <citation type="submission" date="2005-07" db="EMBL/GenBank/DDBJ databases">
        <authorList>
            <person name="Mural R.J."/>
            <person name="Istrail S."/>
            <person name="Sutton G.G."/>
            <person name="Florea L."/>
            <person name="Halpern A.L."/>
            <person name="Mobarry C.M."/>
            <person name="Lippert R."/>
            <person name="Walenz B."/>
            <person name="Shatkay H."/>
            <person name="Dew I."/>
            <person name="Miller J.R."/>
            <person name="Flanigan M.J."/>
            <person name="Edwards N.J."/>
            <person name="Bolanos R."/>
            <person name="Fasulo D."/>
            <person name="Halldorsson B.V."/>
            <person name="Hannenhalli S."/>
            <person name="Turner R."/>
            <person name="Yooseph S."/>
            <person name="Lu F."/>
            <person name="Nusskern D.R."/>
            <person name="Shue B.C."/>
            <person name="Zheng X.H."/>
            <person name="Zhong F."/>
            <person name="Delcher A.L."/>
            <person name="Huson D.H."/>
            <person name="Kravitz S.A."/>
            <person name="Mouchard L."/>
            <person name="Reinert K."/>
            <person name="Remington K.A."/>
            <person name="Clark A.G."/>
            <person name="Waterman M.S."/>
            <person name="Eichler E.E."/>
            <person name="Adams M.D."/>
            <person name="Hunkapiller M.W."/>
            <person name="Myers E.W."/>
            <person name="Venter J.C."/>
        </authorList>
    </citation>
    <scope>NUCLEOTIDE SEQUENCE [LARGE SCALE GENOMIC DNA]</scope>
</reference>
<reference key="4">
    <citation type="journal article" date="2004" name="Genome Res.">
        <title>The status, quality, and expansion of the NIH full-length cDNA project: the Mammalian Gene Collection (MGC).</title>
        <authorList>
            <consortium name="The MGC Project Team"/>
        </authorList>
    </citation>
    <scope>NUCLEOTIDE SEQUENCE [LARGE SCALE MRNA] (ISOFORMS 2; 3 AND 4)</scope>
    <source>
        <tissue>PNS</tissue>
        <tissue>Testis</tissue>
    </source>
</reference>
<reference key="5">
    <citation type="submission" date="1994-06" db="EMBL/GenBank/DDBJ databases">
        <title>Characterization of secretory proteins of human ovarian follicle cells by cDNA cloning.</title>
        <authorList>
            <person name="Klaudiny J.J."/>
            <person name="von der Kammer H.H."/>
            <person name="Scheit K.K."/>
        </authorList>
    </citation>
    <scope>NUCLEOTIDE SEQUENCE [MRNA] OF 887-1585 (ISOFORM 1)</scope>
    <source>
        <tissue>Ovary</tissue>
    </source>
</reference>
<reference key="6">
    <citation type="journal article" date="1998" name="EMBO J.">
        <title>A newly identified N-terminal amino acid sequence of human eIF4G binds poly(A)-binding protein and functions in poly(A)-dependent translation.</title>
        <authorList>
            <person name="Imataka H."/>
            <person name="Gradi A."/>
            <person name="Sonenberg N."/>
        </authorList>
    </citation>
    <scope>INTERACTION WITH PABPC1</scope>
</reference>
<reference key="7">
    <citation type="journal article" date="2003" name="J. Biol. Chem.">
        <title>Phosphorylation screening identifies translational initiation factor 4GII as an intracellular target of Ca(2+)/calmodulin-dependent protein kinase I.</title>
        <authorList>
            <person name="Qin H."/>
            <person name="Raught B."/>
            <person name="Sonenberg N."/>
            <person name="Goldstein E.G."/>
            <person name="Edelman A.M."/>
        </authorList>
    </citation>
    <scope>PHOSPHORYLATION AT SER-1156 BY CAMK1</scope>
</reference>
<reference key="8">
    <citation type="journal article" date="2003" name="J. Virol.">
        <title>Human rhin4ovirus 2A proteinase cleavage sites in eukaryotic initiation factors (eIF) 4GI and eIF4GII are different.</title>
        <authorList>
            <person name="Gradi A."/>
            <person name="Svitkin Y.V."/>
            <person name="Sommergruber W."/>
            <person name="Imataka H."/>
            <person name="Morino S."/>
            <person name="Skern T."/>
            <person name="Sonenberg N."/>
        </authorList>
    </citation>
    <scope>CLEAVAGE BY RHINOVIRUS PROTEASE</scope>
</reference>
<reference key="9">
    <citation type="journal article" date="2004" name="J. Virol.">
        <title>Cleavage of eukaryotic translation initiation factor 4GII within foot-and-mouth disease virus-infected cells: identification of the L-protease cleavage site in vitro.</title>
        <authorList>
            <person name="Gradi A."/>
            <person name="Foeger N."/>
            <person name="Strong R."/>
            <person name="Svitkin Y.V."/>
            <person name="Sonenberg N."/>
            <person name="Skern T."/>
            <person name="Belsham G.J."/>
        </authorList>
    </citation>
    <scope>CLEAVAGE BY FOOT-AND-MOUTH DISEASE VIRUS PROTEASE</scope>
</reference>
<reference key="10">
    <citation type="journal article" date="1999" name="Annu. Rev. Biochem.">
        <title>eIF4 initiation factors: effectors of mRNA recruitment to ribosomes and regulators of translation.</title>
        <authorList>
            <person name="Gingras A.-C."/>
            <person name="Raught B."/>
            <person name="Sonenberg N."/>
        </authorList>
    </citation>
    <scope>REVIEW</scope>
</reference>
<reference key="11">
    <citation type="journal article" date="2006" name="Nat. Biotechnol.">
        <title>A probability-based approach for high-throughput protein phosphorylation analysis and site localization.</title>
        <authorList>
            <person name="Beausoleil S.A."/>
            <person name="Villen J."/>
            <person name="Gerber S.A."/>
            <person name="Rush J."/>
            <person name="Gygi S.P."/>
        </authorList>
    </citation>
    <scope>PHOSPHORYLATION [LARGE SCALE ANALYSIS] AT SER-495</scope>
    <scope>IDENTIFICATION BY MASS SPECTROMETRY [LARGE SCALE ANALYSIS]</scope>
    <source>
        <tissue>Cervix carcinoma</tissue>
    </source>
</reference>
<reference key="12">
    <citation type="journal article" date="2007" name="Mol. Cell. Proteomics">
        <title>Quantitative phosphoproteome profiling of Wnt3a-mediated signaling network: indicating the involvement of ribonucleoside-diphosphate reductase M2 subunit phosphorylation at residue serine 20 in canonical Wnt signal transduction.</title>
        <authorList>
            <person name="Tang L.-Y."/>
            <person name="Deng N."/>
            <person name="Wang L.-S."/>
            <person name="Dai J."/>
            <person name="Wang Z.-L."/>
            <person name="Jiang X.-S."/>
            <person name="Li S.-J."/>
            <person name="Li L."/>
            <person name="Sheng Q.-H."/>
            <person name="Wu D.-Q."/>
            <person name="Li L."/>
            <person name="Zeng R."/>
        </authorList>
    </citation>
    <scope>PHOSPHORYLATION [LARGE SCALE ANALYSIS] AT SER-495</scope>
    <scope>IDENTIFICATION BY MASS SPECTROMETRY [LARGE SCALE ANALYSIS]</scope>
    <source>
        <tissue>Embryonic kidney</tissue>
    </source>
</reference>
<reference key="13">
    <citation type="journal article" date="2008" name="J. Proteome Res.">
        <title>Phosphoproteome of resting human platelets.</title>
        <authorList>
            <person name="Zahedi R.P."/>
            <person name="Lewandrowski U."/>
            <person name="Wiesner J."/>
            <person name="Wortelkamp S."/>
            <person name="Moebius J."/>
            <person name="Schuetz C."/>
            <person name="Walter U."/>
            <person name="Gambaryan S."/>
            <person name="Sickmann A."/>
        </authorList>
    </citation>
    <scope>PHOSPHORYLATION [LARGE SCALE ANALYSIS] AT SER-495</scope>
    <scope>IDENTIFICATION BY MASS SPECTROMETRY [LARGE SCALE ANALYSIS]</scope>
    <source>
        <tissue>Platelet</tissue>
    </source>
</reference>
<reference key="14">
    <citation type="journal article" date="2008" name="Proc. Natl. Acad. Sci. U.S.A.">
        <title>A quantitative atlas of mitotic phosphorylation.</title>
        <authorList>
            <person name="Dephoure N."/>
            <person name="Zhou C."/>
            <person name="Villen J."/>
            <person name="Beausoleil S.A."/>
            <person name="Bakalarski C.E."/>
            <person name="Elledge S.J."/>
            <person name="Gygi S.P."/>
        </authorList>
    </citation>
    <scope>PHOSPHORYLATION [LARGE SCALE ANALYSIS] AT SER-495</scope>
    <scope>IDENTIFICATION BY MASS SPECTROMETRY [LARGE SCALE ANALYSIS]</scope>
    <source>
        <tissue>Cervix carcinoma</tissue>
    </source>
</reference>
<reference key="15">
    <citation type="journal article" date="2009" name="Anal. Chem.">
        <title>Lys-N and trypsin cover complementary parts of the phosphoproteome in a refined SCX-based approach.</title>
        <authorList>
            <person name="Gauci S."/>
            <person name="Helbig A.O."/>
            <person name="Slijper M."/>
            <person name="Krijgsveld J."/>
            <person name="Heck A.J."/>
            <person name="Mohammed S."/>
        </authorList>
    </citation>
    <scope>IDENTIFICATION BY MASS SPECTROMETRY [LARGE SCALE ANALYSIS]</scope>
</reference>
<reference key="16">
    <citation type="journal article" date="2009" name="Sci. Signal.">
        <title>Quantitative phosphoproteomic analysis of T cell receptor signaling reveals system-wide modulation of protein-protein interactions.</title>
        <authorList>
            <person name="Mayya V."/>
            <person name="Lundgren D.H."/>
            <person name="Hwang S.-I."/>
            <person name="Rezaul K."/>
            <person name="Wu L."/>
            <person name="Eng J.K."/>
            <person name="Rodionov V."/>
            <person name="Han D.K."/>
        </authorList>
    </citation>
    <scope>PHOSPHORYLATION [LARGE SCALE ANALYSIS] AT SER-495</scope>
    <scope>IDENTIFICATION BY MASS SPECTROMETRY [LARGE SCALE ANALYSIS]</scope>
    <source>
        <tissue>Leukemic T-cell</tissue>
    </source>
</reference>
<reference key="17">
    <citation type="journal article" date="2010" name="Sci. Signal.">
        <title>Quantitative phosphoproteomics reveals widespread full phosphorylation site occupancy during mitosis.</title>
        <authorList>
            <person name="Olsen J.V."/>
            <person name="Vermeulen M."/>
            <person name="Santamaria A."/>
            <person name="Kumar C."/>
            <person name="Miller M.L."/>
            <person name="Jensen L.J."/>
            <person name="Gnad F."/>
            <person name="Cox J."/>
            <person name="Jensen T.S."/>
            <person name="Nigg E.A."/>
            <person name="Brunak S."/>
            <person name="Mann M."/>
        </authorList>
    </citation>
    <scope>PHOSPHORYLATION [LARGE SCALE ANALYSIS] AT SER-230; SER-232 AND SER-495</scope>
    <scope>IDENTIFICATION BY MASS SPECTROMETRY [LARGE SCALE ANALYSIS]</scope>
    <source>
        <tissue>Cervix carcinoma</tissue>
    </source>
</reference>
<reference key="18">
    <citation type="journal article" date="2011" name="BMC Syst. Biol.">
        <title>Initial characterization of the human central proteome.</title>
        <authorList>
            <person name="Burkard T.R."/>
            <person name="Planyavsky M."/>
            <person name="Kaupe I."/>
            <person name="Breitwieser F.P."/>
            <person name="Buerckstuemmer T."/>
            <person name="Bennett K.L."/>
            <person name="Superti-Furga G."/>
            <person name="Colinge J."/>
        </authorList>
    </citation>
    <scope>IDENTIFICATION BY MASS SPECTROMETRY [LARGE SCALE ANALYSIS]</scope>
</reference>
<reference key="19">
    <citation type="journal article" date="2011" name="Sci. Signal.">
        <title>System-wide temporal characterization of the proteome and phosphoproteome of human embryonic stem cell differentiation.</title>
        <authorList>
            <person name="Rigbolt K.T."/>
            <person name="Prokhorova T.A."/>
            <person name="Akimov V."/>
            <person name="Henningsen J."/>
            <person name="Johansen P.T."/>
            <person name="Kratchmarova I."/>
            <person name="Kassem M."/>
            <person name="Mann M."/>
            <person name="Olsen J.V."/>
            <person name="Blagoev B."/>
        </authorList>
    </citation>
    <scope>PHOSPHORYLATION [LARGE SCALE ANALYSIS] AT SER-230; SER-232 AND SER-495</scope>
    <scope>IDENTIFICATION BY MASS SPECTROMETRY [LARGE SCALE ANALYSIS]</scope>
</reference>
<reference key="20">
    <citation type="journal article" date="2013" name="J. Proteome Res.">
        <title>Toward a comprehensive characterization of a human cancer cell phosphoproteome.</title>
        <authorList>
            <person name="Zhou H."/>
            <person name="Di Palma S."/>
            <person name="Preisinger C."/>
            <person name="Peng M."/>
            <person name="Polat A.N."/>
            <person name="Heck A.J."/>
            <person name="Mohammed S."/>
        </authorList>
    </citation>
    <scope>PHOSPHORYLATION [LARGE SCALE ANALYSIS] AT SER-230; SER-232; SER-495; SER-1218 AND SER-1409</scope>
    <scope>IDENTIFICATION BY MASS SPECTROMETRY [LARGE SCALE ANALYSIS]</scope>
    <source>
        <tissue>Cervix carcinoma</tissue>
        <tissue>Erythroleukemia</tissue>
    </source>
</reference>
<reference key="21">
    <citation type="journal article" date="2014" name="J. Proteomics">
        <title>An enzyme assisted RP-RPLC approach for in-depth analysis of human liver phosphoproteome.</title>
        <authorList>
            <person name="Bian Y."/>
            <person name="Song C."/>
            <person name="Cheng K."/>
            <person name="Dong M."/>
            <person name="Wang F."/>
            <person name="Huang J."/>
            <person name="Sun D."/>
            <person name="Wang L."/>
            <person name="Ye M."/>
            <person name="Zou H."/>
        </authorList>
    </citation>
    <scope>PHOSPHORYLATION [LARGE SCALE ANALYSIS] AT SER-232; SER-267 AND SER-495</scope>
    <scope>IDENTIFICATION BY MASS SPECTROMETRY [LARGE SCALE ANALYSIS]</scope>
    <source>
        <tissue>Liver</tissue>
    </source>
</reference>
<reference key="22">
    <citation type="journal article" date="2003" name="J. Biomol. NMR">
        <title>Backbone resonance assignment of human eukaryotic translation initiation factor 4E (eIF4E) in complex with 7-methylguanosine diphosphate (m7GDP) and a 17-amino acid peptide derived from human eIF4GII.</title>
        <authorList>
            <person name="Miura T."/>
            <person name="Shiratori Y."/>
            <person name="Shimma N."/>
        </authorList>
    </citation>
    <scope>STRUCTURE BY NMR OF 621-637 IN COMPLEX WITH EIF4E</scope>
</reference>
<reference key="23">
    <citation type="journal article" date="2001" name="Mol. Cell">
        <title>A conserved HEAT domain within eIF4G directs assembly of the translation initiation machinery.</title>
        <authorList>
            <person name="Marcotrigiano J."/>
            <person name="Lomakin I.B."/>
            <person name="Sonenberg N."/>
            <person name="Pestova T.V."/>
            <person name="Hellen C.U.T."/>
            <person name="Burley S.K."/>
        </authorList>
    </citation>
    <scope>X-RAY CRYSTALLOGRAPHY (2.37 ANGSTROMS) OF 745-986</scope>
    <scope>MUTAGENESIS OF ARG-756; ARG-759; LYS-764; ARG-814; LYS-820 AND 834-ARG-LYS-835</scope>
</reference>
<proteinExistence type="evidence at protein level"/>
<sequence>MNSQPQTRSPFFQRPQIQPPRATIPNSSPSIRPGAQTPTAVYQANQHIMMVNHLPMPYPVPQGPQYCIPQYRHSGPPYVGPPQQYPVQPPGPGPFYPGPGPGDFPNAYGTPFYPSQPVYQSAPIIVPTQQQPPPAKREKKTIRIRDPNQGGKDITEEIMSGGGSRNPTPPIGRPTSTPTPPQQLPSQVPEHSPVVYGTVESAHLAASTPVTAASDQKQEEKPKPDPVLKSPSPVLRLVLSGEKKEQEGQTSETTAIVSIAELPLPPSPTTVSSVARSTIAAPTSSALSSQPIFTTAIDDRCELSSPREDTIPIPSLTSCTETSDPLPTNENDDDICKKPCSVAPNDIPLVSSTNLINEINGVSEKLSATESIVEIVKQEVLPLTLELEILENPPEEMKLECIPAPITPSTVPSFPPTPPTPPASPPHTPVIVPAAATTVSSPSAAITVQRVLEEDESIRTCLSEDAKEIQNKIEVEADGQTEEILDSQNLNSRRSPVPAQIAITVPKTWKKPKDRTRTTEEMLEAELELKAEEELSIDKVLESEQDKMSQGFHPERDPSDLKKVKAVEENGEEAEPVRNGAESVSEGEGIDANSGSTDSSGDGVTFPFKPESWKPTDTEGKKQYDREFLLDFQFMPACIQKPEGLPPISDVVLDKINQPKLPMRTLDPRILPRGPDFTPAFADFGRQTPGGRGVPLLNVGSRRSQPGQRREPRKIITVSVKEDVHLKKAENAWKPSQKRDSQADDPENIKTQELFRKVRSILNKLTPQMFNQLMKQVSGLTVDTEERLKGVIDLVFEKAIDEPSFSVAYANMCRCLVTLKVPMADKPGNTVNFRKLLLNRCQKEFEKDKADDDVFEKKQKELEAASAPEERTRLHDELEEAKDKARRRSIGNIKFIGELFKLKMLTEAIMHDCVVKLLKNHDEESLECLCRLLTTIGKDLDFEKAKPRMDQYFNQMEKIVKERKTSSRIRFMLQDVIDLRLCNWVSRRADQGPKTIEQIHKEAKIEEQEEQRKVQQLMTKEKRRPGVQRVDEGGWNTVQGAKNSRVLDPSKFLKITKPTIDEKIQLVPKAQLGSWGKGSSGGAKASETDALRSSASSLNRFSALQPPAPSGSTPSTPVEFDSRRTLTSRGSMGREKNDKPLPSATARPNTFMRGGSSKDLLDNQSQEEQRREMLETVKQLTGGVDVERNSTEAERNKTRESAKPEISAMSAHDKAALSEEELERKSKSIIDEFLHINDFKEAMQCVEELNAQGLLHVFVRVGVESTLERSQITRDHMGQLLYQLVQSEKLSKQDFFKGFSETLELADDMAIDIPHIWLYLAELVTPMLKEGGISMRELTIEFSKPLLPVGRAGVLLSEILHLLCKQMSHKKVGALWREADLSWKDFLPEGEDVHNFLLEQKLDFIESDSPCSSEALSKKELSAEELYKRLEKLIIEDKANDEQIFDWVEANLDEIQMSSPTFLRALMTAVCKAAIIADSSTFRVDTAVIKQRVPILLKYLDSDTEKELQALYALQASIVKLDQPANLLRMFFDCLYDEEVISEDAFYKWESSKDPAEQNGKGVALKSVTAFFTWLREAEEESEDN</sequence>
<gene>
    <name type="primary">EIF4G3</name>
</gene>
<comment type="function">
    <text evidence="11">Component of the protein complex eIF4F, which is involved in the recognition of the mRNA cap, ATP-dependent unwinding of 5'-terminal secondary structure and recruitment of mRNA to the ribosome (PubMed:9418880). Functional homolog of EIF4G1 (PubMed:9418880).</text>
</comment>
<comment type="subunit">
    <text evidence="1 2 11">Interacts with EIF4A, EIF4E, eIF3 and PABPC1 (PubMed:9418880). Part of a complex with EIF4E (By similarity). eIF4F is a multi-subunit complex, the composition of which varies with external and internal environmental conditions (By similarity). It is composed of at least EIF4A, EIF4E and EIF4G1/EIF4G3. EIF4G1/EIF4G3 interacts through its C-terminus with the serine/threonine kinases MKNK1, and with MKNK2. Appears to act as a scaffold protein, holding these enzymes in place to phosphorylate eIF4E. Non-phosphorylated EIF4EBP1 competes with EIF4G1/EIFG3 to interact with EIF4E; insulin stimulated MAP-kinase (MAPK1 and MAPK3) phosphorylation of EIF4EBP1 causes dissociation of the complex allowing EIF4G1/EIF4G3 to bind and consequent initiation of translation. EIF4G1/EIF4G3 interacts with PABPC1 to bring about circularization of the mRNA (By similarity). Interacts with FXR1; promoting translation of FXR1 target mRNAs (By similarity).</text>
</comment>
<comment type="interaction">
    <interactant intactId="EBI-15841003">
        <id>O43432-1</id>
    </interactant>
    <interactant intactId="EBI-73440">
        <id>P06730</id>
        <label>EIF4E</label>
    </interactant>
    <organismsDiffer>false</organismsDiffer>
    <experiments>2</experiments>
</comment>
<comment type="alternative products">
    <event type="alternative splicing"/>
    <isoform>
        <id>O43432-1</id>
        <name>1</name>
        <sequence type="displayed"/>
    </isoform>
    <isoform>
        <id>O43432-2</id>
        <name>2</name>
        <sequence type="described" ref="VSP_010487 VSP_010488 VSP_010489"/>
    </isoform>
    <isoform>
        <id>O43432-3</id>
        <name>3</name>
        <sequence type="described" ref="VSP_043447 VSP_043448"/>
    </isoform>
    <isoform>
        <id>O43432-4</id>
        <name>4</name>
        <sequence type="described" ref="VSP_054502"/>
    </isoform>
</comment>
<comment type="PTM">
    <text evidence="8 10">Following infection by certain enteroviruses, rhinoviruses and aphthoviruses, EIF4G1 is cleaved by the viral protease 2A, or the leader protease in the case of aphthoviruses. This shuts down the capped cellular mRNA transcription.</text>
</comment>
<comment type="similarity">
    <text evidence="13">Belongs to the eukaryotic initiation factor 4G family.</text>
</comment>
<accession>O43432</accession>
<accession>B9EGQ7</accession>
<accession>Q15597</accession>
<accession>Q504Z1</accession>
<accession>Q5SWC3</accession>
<accession>Q8NEN1</accession>
<feature type="chain" id="PRO_0000213329" description="Eukaryotic translation initiation factor 4 gamma 3">
    <location>
        <begin position="1"/>
        <end position="1585"/>
    </location>
</feature>
<feature type="repeat" description="HEAT 1">
    <location>
        <begin position="745"/>
        <end position="783"/>
    </location>
</feature>
<feature type="domain" description="MIF4G" evidence="5">
    <location>
        <begin position="755"/>
        <end position="983"/>
    </location>
</feature>
<feature type="repeat" description="HEAT 2">
    <location>
        <begin position="784"/>
        <end position="831"/>
    </location>
</feature>
<feature type="repeat" description="HEAT 3">
    <location>
        <begin position="832"/>
        <end position="905"/>
    </location>
</feature>
<feature type="repeat" description="HEAT 4">
    <location>
        <begin position="906"/>
        <end position="944"/>
    </location>
</feature>
<feature type="repeat" description="HEAT 5">
    <location>
        <begin position="945"/>
        <end position="984"/>
    </location>
</feature>
<feature type="domain" description="MI" evidence="5">
    <location>
        <begin position="1221"/>
        <end position="1343"/>
    </location>
</feature>
<feature type="domain" description="W2" evidence="4">
    <location>
        <begin position="1416"/>
        <end position="1585"/>
    </location>
</feature>
<feature type="region of interest" description="Disordered" evidence="6">
    <location>
        <begin position="1"/>
        <end position="36"/>
    </location>
</feature>
<feature type="region of interest" description="Disordered" evidence="6">
    <location>
        <begin position="128"/>
        <end position="190"/>
    </location>
</feature>
<feature type="region of interest" description="PABPC1-binding">
    <location>
        <begin position="134"/>
        <end position="162"/>
    </location>
</feature>
<feature type="region of interest" description="Disordered" evidence="6">
    <location>
        <begin position="208"/>
        <end position="232"/>
    </location>
</feature>
<feature type="region of interest" description="Disordered" evidence="6">
    <location>
        <begin position="305"/>
        <end position="332"/>
    </location>
</feature>
<feature type="region of interest" description="Disordered" evidence="6">
    <location>
        <begin position="567"/>
        <end position="620"/>
    </location>
</feature>
<feature type="region of interest" description="EIF4E-binding" evidence="1">
    <location>
        <begin position="619"/>
        <end position="630"/>
    </location>
</feature>
<feature type="region of interest" description="Disordered" evidence="6">
    <location>
        <begin position="686"/>
        <end position="711"/>
    </location>
</feature>
<feature type="region of interest" description="eIF3/EIF4A-binding" evidence="1">
    <location>
        <begin position="699"/>
        <end position="1019"/>
    </location>
</feature>
<feature type="region of interest" description="Disordered" evidence="6">
    <location>
        <begin position="729"/>
        <end position="749"/>
    </location>
</feature>
<feature type="region of interest" description="Disordered" evidence="6">
    <location>
        <begin position="860"/>
        <end position="880"/>
    </location>
</feature>
<feature type="region of interest" description="Disordered" evidence="6">
    <location>
        <begin position="1017"/>
        <end position="1042"/>
    </location>
</feature>
<feature type="region of interest" description="Disordered" evidence="6">
    <location>
        <begin position="1072"/>
        <end position="1219"/>
    </location>
</feature>
<feature type="region of interest" description="EIF4A-binding" evidence="1">
    <location>
        <begin position="1433"/>
        <end position="1585"/>
    </location>
</feature>
<feature type="region of interest" description="Necessary but not sufficient for MKNK1-binding" evidence="1">
    <location>
        <begin position="1571"/>
        <end position="1585"/>
    </location>
</feature>
<feature type="coiled-coil region" evidence="3">
    <location>
        <begin position="447"/>
        <end position="475"/>
    </location>
</feature>
<feature type="coiled-coil region" evidence="3">
    <location>
        <begin position="994"/>
        <end position="1023"/>
    </location>
</feature>
<feature type="compositionally biased region" description="Low complexity" evidence="6">
    <location>
        <begin position="10"/>
        <end position="21"/>
    </location>
</feature>
<feature type="compositionally biased region" description="Polar residues" evidence="6">
    <location>
        <begin position="24"/>
        <end position="36"/>
    </location>
</feature>
<feature type="compositionally biased region" description="Pro residues" evidence="6">
    <location>
        <begin position="167"/>
        <end position="183"/>
    </location>
</feature>
<feature type="compositionally biased region" description="Basic and acidic residues" evidence="6">
    <location>
        <begin position="216"/>
        <end position="226"/>
    </location>
</feature>
<feature type="compositionally biased region" description="Polar residues" evidence="6">
    <location>
        <begin position="315"/>
        <end position="329"/>
    </location>
</feature>
<feature type="compositionally biased region" description="Low complexity" evidence="6">
    <location>
        <begin position="594"/>
        <end position="603"/>
    </location>
</feature>
<feature type="compositionally biased region" description="Basic and acidic residues" evidence="6">
    <location>
        <begin position="611"/>
        <end position="620"/>
    </location>
</feature>
<feature type="compositionally biased region" description="Basic and acidic residues" evidence="6">
    <location>
        <begin position="860"/>
        <end position="876"/>
    </location>
</feature>
<feature type="compositionally biased region" description="Polar residues" evidence="6">
    <location>
        <begin position="1091"/>
        <end position="1102"/>
    </location>
</feature>
<feature type="compositionally biased region" description="Basic and acidic residues" evidence="6">
    <location>
        <begin position="1185"/>
        <end position="1203"/>
    </location>
</feature>
<feature type="site" description="Cleavage; by enterovirus/rhinovirus protease 2A">
    <location>
        <begin position="699"/>
        <end position="700"/>
    </location>
</feature>
<feature type="site" description="Cleavage; by foot-and-mouth disease virus leader protease">
    <location>
        <begin position="700"/>
        <end position="701"/>
    </location>
</feature>
<feature type="modified residue" description="Phosphothreonine" evidence="2">
    <location>
        <position position="168"/>
    </location>
</feature>
<feature type="modified residue" description="Phosphoserine" evidence="19 20 21">
    <location>
        <position position="230"/>
    </location>
</feature>
<feature type="modified residue" description="Phosphoserine" evidence="19 20 21 22">
    <location>
        <position position="232"/>
    </location>
</feature>
<feature type="modified residue" description="Phosphoserine" evidence="22">
    <location>
        <position position="267"/>
    </location>
</feature>
<feature type="modified residue" description="Phosphoserine" evidence="2">
    <location>
        <position position="441"/>
    </location>
</feature>
<feature type="modified residue" description="Phosphoserine" evidence="14 15 16 17 18 19 20 21 22">
    <location>
        <position position="495"/>
    </location>
</feature>
<feature type="modified residue" description="Phosphoserine; by CaMK1" evidence="9">
    <location>
        <position position="1156"/>
    </location>
</feature>
<feature type="modified residue" description="Phosphoserine" evidence="21">
    <location>
        <position position="1218"/>
    </location>
</feature>
<feature type="modified residue" description="Phosphoserine" evidence="21">
    <location>
        <position position="1409"/>
    </location>
</feature>
<feature type="splice variant" id="VSP_043447" description="In isoform 3." evidence="12">
    <original>P</original>
    <variation>PGGFRPIQ</variation>
    <location>
        <position position="10"/>
    </location>
</feature>
<feature type="splice variant" id="VSP_010487" description="In isoform 2." evidence="12">
    <original>F</original>
    <variation>FAAGPRPPHHQF</variation>
    <location>
        <position position="11"/>
    </location>
</feature>
<feature type="splice variant" id="VSP_043448" description="In isoform 3." evidence="12">
    <location>
        <position position="182"/>
    </location>
</feature>
<feature type="splice variant" id="VSP_054502" description="In isoform 4." evidence="12">
    <location>
        <begin position="219"/>
        <end position="498"/>
    </location>
</feature>
<feature type="splice variant" id="VSP_010488" description="In isoform 2." evidence="12">
    <original>AQIAIT</original>
    <variation>ETSNEC</variation>
    <location>
        <begin position="499"/>
        <end position="504"/>
    </location>
</feature>
<feature type="splice variant" id="VSP_010489" description="In isoform 2." evidence="12">
    <location>
        <begin position="505"/>
        <end position="1585"/>
    </location>
</feature>
<feature type="sequence variant" id="VAR_048924" description="In dbSNP:rs35731992.">
    <original>Q</original>
    <variation>R</variation>
    <location>
        <position position="378"/>
    </location>
</feature>
<feature type="sequence variant" id="VAR_034009" description="In dbSNP:rs35176330.">
    <original>P</original>
    <variation>A</variation>
    <location>
        <position position="496"/>
    </location>
</feature>
<feature type="sequence variant" id="VAR_048925" description="In dbSNP:rs2230572.">
    <original>D</original>
    <variation>E</variation>
    <location>
        <position position="1185"/>
    </location>
</feature>
<feature type="mutagenesis site" description="Reduces binding to EIF4A; when associated with D-759 and D-764." evidence="7">
    <original>R</original>
    <variation>D</variation>
    <location>
        <position position="756"/>
    </location>
</feature>
<feature type="mutagenesis site" description="Reduces binding to EIF4A; when associated with D-756 and D-764." evidence="7">
    <original>R</original>
    <variation>D</variation>
    <location>
        <position position="759"/>
    </location>
</feature>
<feature type="mutagenesis site" description="Reduces binding to EIF4A; when associated with D-756 and D-759." evidence="7">
    <original>K</original>
    <variation>D</variation>
    <location>
        <position position="764"/>
    </location>
</feature>
<feature type="mutagenesis site" description="Reduces binding to EIF4A; when associated with D-820." evidence="7">
    <original>R</original>
    <variation>D</variation>
    <location>
        <position position="814"/>
    </location>
</feature>
<feature type="mutagenesis site" description="Reduces binding to EIF4A; when associated with D-814." evidence="7">
    <original>K</original>
    <variation>D</variation>
    <location>
        <position position="820"/>
    </location>
</feature>
<feature type="mutagenesis site" description="Reduces binding to IRES." evidence="7">
    <original>RK</original>
    <variation>DD</variation>
    <location>
        <begin position="834"/>
        <end position="835"/>
    </location>
</feature>
<feature type="sequence conflict" description="In Ref. 4; AAH30578." evidence="13" ref="4">
    <original>M</original>
    <variation>I</variation>
    <location>
        <position position="159"/>
    </location>
</feature>
<feature type="sequence conflict" description="In Ref. 4; AAH30578." evidence="13" ref="4">
    <original>D</original>
    <variation>G</variation>
    <location>
        <position position="333"/>
    </location>
</feature>
<feature type="helix" evidence="23">
    <location>
        <begin position="746"/>
        <end position="762"/>
    </location>
</feature>
<feature type="helix" evidence="23">
    <location>
        <begin position="770"/>
        <end position="777"/>
    </location>
</feature>
<feature type="helix" evidence="23">
    <location>
        <begin position="785"/>
        <end position="801"/>
    </location>
</feature>
<feature type="helix" evidence="23">
    <location>
        <begin position="803"/>
        <end position="805"/>
    </location>
</feature>
<feature type="helix" evidence="23">
    <location>
        <begin position="806"/>
        <end position="816"/>
    </location>
</feature>
<feature type="helix" evidence="23">
    <location>
        <begin position="833"/>
        <end position="848"/>
    </location>
</feature>
<feature type="helix" evidence="23">
    <location>
        <begin position="885"/>
        <end position="900"/>
    </location>
</feature>
<feature type="turn" evidence="23">
    <location>
        <begin position="901"/>
        <end position="903"/>
    </location>
</feature>
<feature type="helix" evidence="23">
    <location>
        <begin position="907"/>
        <end position="919"/>
    </location>
</feature>
<feature type="helix" evidence="23">
    <location>
        <begin position="923"/>
        <end position="940"/>
    </location>
</feature>
<feature type="turn" evidence="23">
    <location>
        <begin position="943"/>
        <end position="945"/>
    </location>
</feature>
<feature type="helix" evidence="23">
    <location>
        <begin position="946"/>
        <end position="961"/>
    </location>
</feature>
<feature type="helix" evidence="23">
    <location>
        <begin position="967"/>
        <end position="981"/>
    </location>
</feature>
<feature type="turn" evidence="23">
    <location>
        <begin position="982"/>
        <end position="984"/>
    </location>
</feature>
<keyword id="KW-0002">3D-structure</keyword>
<keyword id="KW-0025">Alternative splicing</keyword>
<keyword id="KW-0175">Coiled coil</keyword>
<keyword id="KW-0396">Initiation factor</keyword>
<keyword id="KW-0597">Phosphoprotein</keyword>
<keyword id="KW-0648">Protein biosynthesis</keyword>
<keyword id="KW-1267">Proteomics identification</keyword>
<keyword id="KW-1185">Reference proteome</keyword>
<keyword id="KW-0677">Repeat</keyword>
<keyword id="KW-0694">RNA-binding</keyword>
<keyword id="KW-0810">Translation regulation</keyword>
<organism>
    <name type="scientific">Homo sapiens</name>
    <name type="common">Human</name>
    <dbReference type="NCBI Taxonomy" id="9606"/>
    <lineage>
        <taxon>Eukaryota</taxon>
        <taxon>Metazoa</taxon>
        <taxon>Chordata</taxon>
        <taxon>Craniata</taxon>
        <taxon>Vertebrata</taxon>
        <taxon>Euteleostomi</taxon>
        <taxon>Mammalia</taxon>
        <taxon>Eutheria</taxon>
        <taxon>Euarchontoglires</taxon>
        <taxon>Primates</taxon>
        <taxon>Haplorrhini</taxon>
        <taxon>Catarrhini</taxon>
        <taxon>Hominidae</taxon>
        <taxon>Homo</taxon>
    </lineage>
</organism>
<protein>
    <recommendedName>
        <fullName>Eukaryotic translation initiation factor 4 gamma 3</fullName>
        <shortName>eIF-4-gamma 3</shortName>
        <shortName>eIF-4G 3</shortName>
        <shortName>eIF4G 3</shortName>
    </recommendedName>
    <alternativeName>
        <fullName>eIF-4-gamma II</fullName>
        <shortName>eIF4GII</shortName>
    </alternativeName>
</protein>
<evidence type="ECO:0000250" key="1">
    <source>
        <dbReference type="UniProtKB" id="Q04637"/>
    </source>
</evidence>
<evidence type="ECO:0000250" key="2">
    <source>
        <dbReference type="UniProtKB" id="Q80XI3"/>
    </source>
</evidence>
<evidence type="ECO:0000255" key="3"/>
<evidence type="ECO:0000255" key="4">
    <source>
        <dbReference type="PROSITE-ProRule" id="PRU00695"/>
    </source>
</evidence>
<evidence type="ECO:0000255" key="5">
    <source>
        <dbReference type="PROSITE-ProRule" id="PRU00698"/>
    </source>
</evidence>
<evidence type="ECO:0000256" key="6">
    <source>
        <dbReference type="SAM" id="MobiDB-lite"/>
    </source>
</evidence>
<evidence type="ECO:0000269" key="7">
    <source>
    </source>
</evidence>
<evidence type="ECO:0000269" key="8">
    <source>
    </source>
</evidence>
<evidence type="ECO:0000269" key="9">
    <source>
    </source>
</evidence>
<evidence type="ECO:0000269" key="10">
    <source>
    </source>
</evidence>
<evidence type="ECO:0000269" key="11">
    <source>
    </source>
</evidence>
<evidence type="ECO:0000303" key="12">
    <source>
    </source>
</evidence>
<evidence type="ECO:0000305" key="13"/>
<evidence type="ECO:0007744" key="14">
    <source>
    </source>
</evidence>
<evidence type="ECO:0007744" key="15">
    <source>
    </source>
</evidence>
<evidence type="ECO:0007744" key="16">
    <source>
    </source>
</evidence>
<evidence type="ECO:0007744" key="17">
    <source>
    </source>
</evidence>
<evidence type="ECO:0007744" key="18">
    <source>
    </source>
</evidence>
<evidence type="ECO:0007744" key="19">
    <source>
    </source>
</evidence>
<evidence type="ECO:0007744" key="20">
    <source>
    </source>
</evidence>
<evidence type="ECO:0007744" key="21">
    <source>
    </source>
</evidence>
<evidence type="ECO:0007744" key="22">
    <source>
    </source>
</evidence>
<evidence type="ECO:0007829" key="23">
    <source>
        <dbReference type="PDB" id="1HU3"/>
    </source>
</evidence>
<name>IF4G3_HUMAN</name>
<dbReference type="EMBL" id="AF012072">
    <property type="protein sequence ID" value="AAC02903.2"/>
    <property type="molecule type" value="mRNA"/>
</dbReference>
<dbReference type="EMBL" id="AL031005">
    <property type="status" value="NOT_ANNOTATED_CDS"/>
    <property type="molecule type" value="Genomic_DNA"/>
</dbReference>
<dbReference type="EMBL" id="AL358392">
    <property type="status" value="NOT_ANNOTATED_CDS"/>
    <property type="molecule type" value="Genomic_DNA"/>
</dbReference>
<dbReference type="EMBL" id="AL606477">
    <property type="status" value="NOT_ANNOTATED_CDS"/>
    <property type="molecule type" value="Genomic_DNA"/>
</dbReference>
<dbReference type="EMBL" id="AL627311">
    <property type="status" value="NOT_ANNOTATED_CDS"/>
    <property type="molecule type" value="Genomic_DNA"/>
</dbReference>
<dbReference type="EMBL" id="AL672037">
    <property type="status" value="NOT_ANNOTATED_CDS"/>
    <property type="molecule type" value="Genomic_DNA"/>
</dbReference>
<dbReference type="EMBL" id="CH471134">
    <property type="protein sequence ID" value="EAW94956.1"/>
    <property type="molecule type" value="Genomic_DNA"/>
</dbReference>
<dbReference type="EMBL" id="BC030578">
    <property type="protein sequence ID" value="AAH30578.1"/>
    <property type="molecule type" value="mRNA"/>
</dbReference>
<dbReference type="EMBL" id="BC094683">
    <property type="protein sequence ID" value="AAH94683.1"/>
    <property type="molecule type" value="mRNA"/>
</dbReference>
<dbReference type="EMBL" id="BC136643">
    <property type="protein sequence ID" value="AAI36644.1"/>
    <property type="molecule type" value="mRNA"/>
</dbReference>
<dbReference type="EMBL" id="Z34918">
    <property type="protein sequence ID" value="CAA84397.1"/>
    <property type="molecule type" value="mRNA"/>
</dbReference>
<dbReference type="CCDS" id="CCDS214.1">
    <molecule id="O43432-1"/>
</dbReference>
<dbReference type="CCDS" id="CCDS55580.1">
    <molecule id="O43432-3"/>
</dbReference>
<dbReference type="CCDS" id="CCDS59192.1">
    <molecule id="O43432-2"/>
</dbReference>
<dbReference type="PIR" id="S49172">
    <property type="entry name" value="S49172"/>
</dbReference>
<dbReference type="RefSeq" id="NP_001185730.1">
    <property type="nucleotide sequence ID" value="NM_001198801.1"/>
</dbReference>
<dbReference type="RefSeq" id="NP_001185731.1">
    <molecule id="O43432-3"/>
    <property type="nucleotide sequence ID" value="NM_001198802.2"/>
</dbReference>
<dbReference type="RefSeq" id="NP_001185732.1">
    <molecule id="O43432-2"/>
    <property type="nucleotide sequence ID" value="NM_001198803.2"/>
</dbReference>
<dbReference type="RefSeq" id="NP_001378821.1">
    <molecule id="O43432-1"/>
    <property type="nucleotide sequence ID" value="NM_001391892.1"/>
</dbReference>
<dbReference type="RefSeq" id="NP_001378822.1">
    <molecule id="O43432-1"/>
    <property type="nucleotide sequence ID" value="NM_001391893.1"/>
</dbReference>
<dbReference type="RefSeq" id="NP_001378823.1">
    <molecule id="O43432-1"/>
    <property type="nucleotide sequence ID" value="NM_001391894.1"/>
</dbReference>
<dbReference type="RefSeq" id="NP_003751.2">
    <molecule id="O43432-1"/>
    <property type="nucleotide sequence ID" value="NM_003760.4"/>
</dbReference>
<dbReference type="RefSeq" id="XP_016858189.1">
    <property type="nucleotide sequence ID" value="XM_017002700.1"/>
</dbReference>
<dbReference type="RefSeq" id="XP_016858197.1">
    <molecule id="O43432-4"/>
    <property type="nucleotide sequence ID" value="XM_017002708.3"/>
</dbReference>
<dbReference type="RefSeq" id="XP_016858201.1">
    <property type="nucleotide sequence ID" value="XM_017002712.1"/>
</dbReference>
<dbReference type="RefSeq" id="XP_047289268.1">
    <molecule id="O43432-3"/>
    <property type="nucleotide sequence ID" value="XM_047433312.1"/>
</dbReference>
<dbReference type="RefSeq" id="XP_047289275.1">
    <molecule id="O43432-1"/>
    <property type="nucleotide sequence ID" value="XM_047433319.1"/>
</dbReference>
<dbReference type="RefSeq" id="XP_054195359.1">
    <molecule id="O43432-3"/>
    <property type="nucleotide sequence ID" value="XM_054339384.1"/>
</dbReference>
<dbReference type="PDB" id="1HU3">
    <property type="method" value="X-ray"/>
    <property type="resolution" value="2.37 A"/>
    <property type="chains" value="A=745-1003"/>
</dbReference>
<dbReference type="PDBsum" id="1HU3"/>
<dbReference type="BMRB" id="O43432"/>
<dbReference type="SMR" id="O43432"/>
<dbReference type="BioGRID" id="114220">
    <property type="interactions" value="162"/>
</dbReference>
<dbReference type="ComplexPortal" id="CPX-5635">
    <property type="entry name" value="Eukaryotic translation initiation factor 4F, EIF4A1 and EIF4G3 variant"/>
</dbReference>
<dbReference type="ComplexPortal" id="CPX-5636">
    <property type="entry name" value="Eukaryotic translation initiation factor 4F, EIF4A2 and EIF4G3 variant"/>
</dbReference>
<dbReference type="DIP" id="DIP-33245N"/>
<dbReference type="ELM" id="O43432"/>
<dbReference type="FunCoup" id="O43432">
    <property type="interactions" value="2543"/>
</dbReference>
<dbReference type="IntAct" id="O43432">
    <property type="interactions" value="82"/>
</dbReference>
<dbReference type="MINT" id="O43432"/>
<dbReference type="STRING" id="9606.ENSP00000383274"/>
<dbReference type="GlyCosmos" id="O43432">
    <property type="glycosylation" value="8 sites, 2 glycans"/>
</dbReference>
<dbReference type="GlyGen" id="O43432">
    <property type="glycosylation" value="23 sites, 1 N-linked glycan (1 site), 2 O-linked glycans (16 sites)"/>
</dbReference>
<dbReference type="iPTMnet" id="O43432"/>
<dbReference type="MetOSite" id="O43432"/>
<dbReference type="PhosphoSitePlus" id="O43432"/>
<dbReference type="BioMuta" id="EIF4G3"/>
<dbReference type="jPOST" id="O43432"/>
<dbReference type="MassIVE" id="O43432"/>
<dbReference type="PaxDb" id="9606-ENSP00000383274"/>
<dbReference type="PeptideAtlas" id="O43432"/>
<dbReference type="ProteomicsDB" id="48943">
    <molecule id="O43432-1"/>
</dbReference>
<dbReference type="ProteomicsDB" id="48944">
    <molecule id="O43432-2"/>
</dbReference>
<dbReference type="ProteomicsDB" id="48945">
    <molecule id="O43432-3"/>
</dbReference>
<dbReference type="ProteomicsDB" id="62418"/>
<dbReference type="Pumba" id="O43432"/>
<dbReference type="Antibodypedia" id="15146">
    <property type="antibodies" value="153 antibodies from 24 providers"/>
</dbReference>
<dbReference type="DNASU" id="8672"/>
<dbReference type="Ensembl" id="ENST00000264211.13">
    <molecule id="O43432-1"/>
    <property type="protein sequence ID" value="ENSP00000264211.7"/>
    <property type="gene ID" value="ENSG00000075151.24"/>
</dbReference>
<dbReference type="Ensembl" id="ENST00000356916.7">
    <molecule id="O43432-2"/>
    <property type="protein sequence ID" value="ENSP00000349386.3"/>
    <property type="gene ID" value="ENSG00000075151.24"/>
</dbReference>
<dbReference type="Ensembl" id="ENST00000374935.7">
    <molecule id="O43432-4"/>
    <property type="protein sequence ID" value="ENSP00000364071.3"/>
    <property type="gene ID" value="ENSG00000075151.24"/>
</dbReference>
<dbReference type="Ensembl" id="ENST00000682284.1">
    <molecule id="O43432-2"/>
    <property type="protein sequence ID" value="ENSP00000507819.1"/>
    <property type="gene ID" value="ENSG00000075151.24"/>
</dbReference>
<dbReference type="Ensembl" id="ENST00000686579.1">
    <molecule id="O43432-3"/>
    <property type="protein sequence ID" value="ENSP00000509941.1"/>
    <property type="gene ID" value="ENSG00000075151.24"/>
</dbReference>
<dbReference type="GeneID" id="8672"/>
<dbReference type="KEGG" id="hsa:8672"/>
<dbReference type="UCSC" id="uc001bee.4">
    <molecule id="O43432-1"/>
    <property type="organism name" value="human"/>
</dbReference>
<dbReference type="AGR" id="HGNC:3298"/>
<dbReference type="CTD" id="8672"/>
<dbReference type="DisGeNET" id="8672"/>
<dbReference type="GeneCards" id="EIF4G3"/>
<dbReference type="HGNC" id="HGNC:3298">
    <property type="gene designation" value="EIF4G3"/>
</dbReference>
<dbReference type="HPA" id="ENSG00000075151">
    <property type="expression patterns" value="Low tissue specificity"/>
</dbReference>
<dbReference type="MalaCards" id="EIF4G3"/>
<dbReference type="MIM" id="603929">
    <property type="type" value="gene"/>
</dbReference>
<dbReference type="neXtProt" id="NX_O43432"/>
<dbReference type="OpenTargets" id="ENSG00000075151"/>
<dbReference type="PharmGKB" id="PA27724"/>
<dbReference type="VEuPathDB" id="HostDB:ENSG00000075151"/>
<dbReference type="eggNOG" id="KOG0401">
    <property type="taxonomic scope" value="Eukaryota"/>
</dbReference>
<dbReference type="GeneTree" id="ENSGT00940000156454"/>
<dbReference type="HOGENOM" id="CLU_001519_2_0_1"/>
<dbReference type="InParanoid" id="O43432"/>
<dbReference type="OrthoDB" id="514777at2759"/>
<dbReference type="PAN-GO" id="O43432">
    <property type="GO annotations" value="3 GO annotations based on evolutionary models"/>
</dbReference>
<dbReference type="PhylomeDB" id="O43432"/>
<dbReference type="TreeFam" id="TF101527"/>
<dbReference type="PathwayCommons" id="O43432"/>
<dbReference type="Reactome" id="R-HSA-1169408">
    <property type="pathway name" value="ISG15 antiviral mechanism"/>
</dbReference>
<dbReference type="SignaLink" id="O43432"/>
<dbReference type="SIGNOR" id="O43432"/>
<dbReference type="BioGRID-ORCS" id="8672">
    <property type="hits" value="10 hits in 1160 CRISPR screens"/>
</dbReference>
<dbReference type="CD-CODE" id="DEE660B4">
    <property type="entry name" value="Stress granule"/>
</dbReference>
<dbReference type="ChiTaRS" id="EIF4G3">
    <property type="organism name" value="human"/>
</dbReference>
<dbReference type="EvolutionaryTrace" id="O43432"/>
<dbReference type="GeneWiki" id="EIF4G3"/>
<dbReference type="GenomeRNAi" id="8672"/>
<dbReference type="Pharos" id="O43432">
    <property type="development level" value="Tbio"/>
</dbReference>
<dbReference type="PRO" id="PR:O43432"/>
<dbReference type="Proteomes" id="UP000005640">
    <property type="component" value="Chromosome 1"/>
</dbReference>
<dbReference type="RNAct" id="O43432">
    <property type="molecule type" value="protein"/>
</dbReference>
<dbReference type="Bgee" id="ENSG00000075151">
    <property type="expression patterns" value="Expressed in sperm and 201 other cell types or tissues"/>
</dbReference>
<dbReference type="ExpressionAtlas" id="O43432">
    <property type="expression patterns" value="baseline and differential"/>
</dbReference>
<dbReference type="GO" id="GO:0005829">
    <property type="term" value="C:cytosol"/>
    <property type="evidence" value="ECO:0000304"/>
    <property type="project" value="Reactome"/>
</dbReference>
<dbReference type="GO" id="GO:0016281">
    <property type="term" value="C:eukaryotic translation initiation factor 4F complex"/>
    <property type="evidence" value="ECO:0000318"/>
    <property type="project" value="GO_Central"/>
</dbReference>
<dbReference type="GO" id="GO:0043232">
    <property type="term" value="C:intracellular membraneless organelle"/>
    <property type="evidence" value="ECO:0000250"/>
    <property type="project" value="UniProt"/>
</dbReference>
<dbReference type="GO" id="GO:0003729">
    <property type="term" value="F:mRNA binding"/>
    <property type="evidence" value="ECO:0000318"/>
    <property type="project" value="GO_Central"/>
</dbReference>
<dbReference type="GO" id="GO:0003723">
    <property type="term" value="F:RNA binding"/>
    <property type="evidence" value="ECO:0007005"/>
    <property type="project" value="UniProtKB"/>
</dbReference>
<dbReference type="GO" id="GO:0000339">
    <property type="term" value="F:RNA cap binding"/>
    <property type="evidence" value="ECO:0000304"/>
    <property type="project" value="ProtInc"/>
</dbReference>
<dbReference type="GO" id="GO:0008135">
    <property type="term" value="F:translation factor activity, RNA binding"/>
    <property type="evidence" value="ECO:0000304"/>
    <property type="project" value="ProtInc"/>
</dbReference>
<dbReference type="GO" id="GO:0003743">
    <property type="term" value="F:translation initiation factor activity"/>
    <property type="evidence" value="ECO:0000250"/>
    <property type="project" value="UniProt"/>
</dbReference>
<dbReference type="GO" id="GO:0045727">
    <property type="term" value="P:positive regulation of translation"/>
    <property type="evidence" value="ECO:0000250"/>
    <property type="project" value="UniProt"/>
</dbReference>
<dbReference type="GO" id="GO:0006446">
    <property type="term" value="P:regulation of translational initiation"/>
    <property type="evidence" value="ECO:0000304"/>
    <property type="project" value="ProtInc"/>
</dbReference>
<dbReference type="GO" id="GO:0007286">
    <property type="term" value="P:spermatid development"/>
    <property type="evidence" value="ECO:0000250"/>
    <property type="project" value="UniProt"/>
</dbReference>
<dbReference type="GO" id="GO:0006413">
    <property type="term" value="P:translational initiation"/>
    <property type="evidence" value="ECO:0000318"/>
    <property type="project" value="GO_Central"/>
</dbReference>
<dbReference type="CDD" id="cd11559">
    <property type="entry name" value="W2_eIF4G1_like"/>
    <property type="match status" value="1"/>
</dbReference>
<dbReference type="FunFam" id="1.25.40.180:FF:000001">
    <property type="entry name" value="Eukaryotic translation initiation factor 4 gamma, 3, putative"/>
    <property type="match status" value="1"/>
</dbReference>
<dbReference type="FunFam" id="1.25.40.180:FF:000002">
    <property type="entry name" value="Eukaryotic translation initiation factor 4 gamma, 3, putative"/>
    <property type="match status" value="1"/>
</dbReference>
<dbReference type="FunFam" id="1.25.40.180:FF:000003">
    <property type="entry name" value="Putative eukaryotic translation initiation factor 4 gamma 1"/>
    <property type="match status" value="1"/>
</dbReference>
<dbReference type="Gene3D" id="1.25.40.180">
    <property type="match status" value="3"/>
</dbReference>
<dbReference type="InterPro" id="IPR016024">
    <property type="entry name" value="ARM-type_fold"/>
</dbReference>
<dbReference type="InterPro" id="IPR003891">
    <property type="entry name" value="Initiation_fac_eIF4g_MI"/>
</dbReference>
<dbReference type="InterPro" id="IPR003890">
    <property type="entry name" value="MIF4G-like_typ-3"/>
</dbReference>
<dbReference type="InterPro" id="IPR003307">
    <property type="entry name" value="W2_domain"/>
</dbReference>
<dbReference type="PANTHER" id="PTHR23253">
    <property type="entry name" value="EUKARYOTIC TRANSLATION INITIATION FACTOR 4 GAMMA"/>
    <property type="match status" value="1"/>
</dbReference>
<dbReference type="PANTHER" id="PTHR23253:SF23">
    <property type="entry name" value="EUKARYOTIC TRANSLATION INITIATION FACTOR 4 GAMMA 3"/>
    <property type="match status" value="1"/>
</dbReference>
<dbReference type="Pfam" id="PF02847">
    <property type="entry name" value="MA3"/>
    <property type="match status" value="1"/>
</dbReference>
<dbReference type="Pfam" id="PF02854">
    <property type="entry name" value="MIF4G"/>
    <property type="match status" value="1"/>
</dbReference>
<dbReference type="Pfam" id="PF02020">
    <property type="entry name" value="W2"/>
    <property type="match status" value="1"/>
</dbReference>
<dbReference type="SMART" id="SM00515">
    <property type="entry name" value="eIF5C"/>
    <property type="match status" value="1"/>
</dbReference>
<dbReference type="SMART" id="SM00544">
    <property type="entry name" value="MA3"/>
    <property type="match status" value="1"/>
</dbReference>
<dbReference type="SMART" id="SM00543">
    <property type="entry name" value="MIF4G"/>
    <property type="match status" value="1"/>
</dbReference>
<dbReference type="SUPFAM" id="SSF48371">
    <property type="entry name" value="ARM repeat"/>
    <property type="match status" value="3"/>
</dbReference>
<dbReference type="PROSITE" id="PS51366">
    <property type="entry name" value="MI"/>
    <property type="match status" value="1"/>
</dbReference>
<dbReference type="PROSITE" id="PS51363">
    <property type="entry name" value="W2"/>
    <property type="match status" value="1"/>
</dbReference>